<dbReference type="EC" id="1.4.3.5" evidence="1"/>
<dbReference type="EMBL" id="CP000323">
    <property type="protein sequence ID" value="ABE74788.1"/>
    <property type="molecule type" value="Genomic_DNA"/>
</dbReference>
<dbReference type="RefSeq" id="WP_011513346.1">
    <property type="nucleotide sequence ID" value="NC_007969.1"/>
</dbReference>
<dbReference type="SMR" id="Q1QC15"/>
<dbReference type="STRING" id="335284.Pcryo_1007"/>
<dbReference type="KEGG" id="pcr:Pcryo_1007"/>
<dbReference type="eggNOG" id="COG0259">
    <property type="taxonomic scope" value="Bacteria"/>
</dbReference>
<dbReference type="HOGENOM" id="CLU_032263_2_2_6"/>
<dbReference type="UniPathway" id="UPA01068">
    <property type="reaction ID" value="UER00304"/>
</dbReference>
<dbReference type="UniPathway" id="UPA01068">
    <property type="reaction ID" value="UER00305"/>
</dbReference>
<dbReference type="Proteomes" id="UP000002425">
    <property type="component" value="Chromosome"/>
</dbReference>
<dbReference type="GO" id="GO:0010181">
    <property type="term" value="F:FMN binding"/>
    <property type="evidence" value="ECO:0007669"/>
    <property type="project" value="UniProtKB-UniRule"/>
</dbReference>
<dbReference type="GO" id="GO:0004733">
    <property type="term" value="F:pyridoxamine phosphate oxidase activity"/>
    <property type="evidence" value="ECO:0007669"/>
    <property type="project" value="UniProtKB-UniRule"/>
</dbReference>
<dbReference type="GO" id="GO:0008615">
    <property type="term" value="P:pyridoxine biosynthetic process"/>
    <property type="evidence" value="ECO:0007669"/>
    <property type="project" value="UniProtKB-KW"/>
</dbReference>
<dbReference type="Gene3D" id="2.30.110.10">
    <property type="entry name" value="Electron Transport, Fmn-binding Protein, Chain A"/>
    <property type="match status" value="1"/>
</dbReference>
<dbReference type="HAMAP" id="MF_01629">
    <property type="entry name" value="PdxH"/>
    <property type="match status" value="1"/>
</dbReference>
<dbReference type="InterPro" id="IPR000659">
    <property type="entry name" value="Pyridox_Oxase"/>
</dbReference>
<dbReference type="InterPro" id="IPR019740">
    <property type="entry name" value="Pyridox_Oxase_CS"/>
</dbReference>
<dbReference type="InterPro" id="IPR011576">
    <property type="entry name" value="Pyridox_Oxase_N"/>
</dbReference>
<dbReference type="InterPro" id="IPR019576">
    <property type="entry name" value="Pyridoxamine_oxidase_dimer_C"/>
</dbReference>
<dbReference type="InterPro" id="IPR012349">
    <property type="entry name" value="Split_barrel_FMN-bd"/>
</dbReference>
<dbReference type="NCBIfam" id="TIGR00558">
    <property type="entry name" value="pdxH"/>
    <property type="match status" value="1"/>
</dbReference>
<dbReference type="NCBIfam" id="NF004231">
    <property type="entry name" value="PRK05679.1"/>
    <property type="match status" value="1"/>
</dbReference>
<dbReference type="PANTHER" id="PTHR10851:SF0">
    <property type="entry name" value="PYRIDOXINE-5'-PHOSPHATE OXIDASE"/>
    <property type="match status" value="1"/>
</dbReference>
<dbReference type="PANTHER" id="PTHR10851">
    <property type="entry name" value="PYRIDOXINE-5-PHOSPHATE OXIDASE"/>
    <property type="match status" value="1"/>
</dbReference>
<dbReference type="Pfam" id="PF10590">
    <property type="entry name" value="PNP_phzG_C"/>
    <property type="match status" value="1"/>
</dbReference>
<dbReference type="Pfam" id="PF01243">
    <property type="entry name" value="PNPOx_N"/>
    <property type="match status" value="1"/>
</dbReference>
<dbReference type="PIRSF" id="PIRSF000190">
    <property type="entry name" value="Pyd_amn-ph_oxd"/>
    <property type="match status" value="1"/>
</dbReference>
<dbReference type="SUPFAM" id="SSF50475">
    <property type="entry name" value="FMN-binding split barrel"/>
    <property type="match status" value="1"/>
</dbReference>
<dbReference type="PROSITE" id="PS01064">
    <property type="entry name" value="PYRIDOX_OXIDASE"/>
    <property type="match status" value="1"/>
</dbReference>
<gene>
    <name evidence="1" type="primary">pdxH</name>
    <name type="ordered locus">Pcryo_1007</name>
</gene>
<sequence length="216" mass="24684">MSMDFSDQRLSYEKGQLDQQSIPASPFELLNVWMQQAIEENVQEPYAMSLATCGADNKPSVRIVLLREITDKGIVFYTNYESAKGQDIAENPNVEALFFWHKLERQIRISGSIAKIDADKSAAYFQKRPHDSQVGAWVSQPQSGEVANRDVMEQTFEQLKIDYPEGAAVPTPEFWGGYEITVNEIEFWQGRANRMHDRIVYHKEADGSFSTKRLLP</sequence>
<protein>
    <recommendedName>
        <fullName evidence="1">Pyridoxine/pyridoxamine 5'-phosphate oxidase</fullName>
        <ecNumber evidence="1">1.4.3.5</ecNumber>
    </recommendedName>
    <alternativeName>
        <fullName evidence="1">PNP/PMP oxidase</fullName>
        <shortName evidence="1">PNPOx</shortName>
    </alternativeName>
    <alternativeName>
        <fullName evidence="1">Pyridoxal 5'-phosphate synthase</fullName>
    </alternativeName>
</protein>
<accession>Q1QC15</accession>
<feature type="chain" id="PRO_0000255877" description="Pyridoxine/pyridoxamine 5'-phosphate oxidase">
    <location>
        <begin position="1"/>
        <end position="216"/>
    </location>
</feature>
<feature type="binding site" evidence="1">
    <location>
        <begin position="9"/>
        <end position="12"/>
    </location>
    <ligand>
        <name>substrate</name>
    </ligand>
</feature>
<feature type="binding site" evidence="1">
    <location>
        <begin position="62"/>
        <end position="67"/>
    </location>
    <ligand>
        <name>FMN</name>
        <dbReference type="ChEBI" id="CHEBI:58210"/>
    </ligand>
</feature>
<feature type="binding site" evidence="1">
    <location>
        <position position="67"/>
    </location>
    <ligand>
        <name>substrate</name>
    </ligand>
</feature>
<feature type="binding site" evidence="1">
    <location>
        <begin position="77"/>
        <end position="78"/>
    </location>
    <ligand>
        <name>FMN</name>
        <dbReference type="ChEBI" id="CHEBI:58210"/>
    </ligand>
</feature>
<feature type="binding site" evidence="1">
    <location>
        <position position="84"/>
    </location>
    <ligand>
        <name>FMN</name>
        <dbReference type="ChEBI" id="CHEBI:58210"/>
    </ligand>
</feature>
<feature type="binding site" evidence="1">
    <location>
        <position position="106"/>
    </location>
    <ligand>
        <name>FMN</name>
        <dbReference type="ChEBI" id="CHEBI:58210"/>
    </ligand>
</feature>
<feature type="binding site" evidence="1">
    <location>
        <position position="124"/>
    </location>
    <ligand>
        <name>substrate</name>
    </ligand>
</feature>
<feature type="binding site" evidence="1">
    <location>
        <position position="128"/>
    </location>
    <ligand>
        <name>substrate</name>
    </ligand>
</feature>
<feature type="binding site" evidence="1">
    <location>
        <position position="132"/>
    </location>
    <ligand>
        <name>substrate</name>
    </ligand>
</feature>
<feature type="binding site" evidence="1">
    <location>
        <begin position="142"/>
        <end position="143"/>
    </location>
    <ligand>
        <name>FMN</name>
        <dbReference type="ChEBI" id="CHEBI:58210"/>
    </ligand>
</feature>
<feature type="binding site" evidence="1">
    <location>
        <position position="188"/>
    </location>
    <ligand>
        <name>FMN</name>
        <dbReference type="ChEBI" id="CHEBI:58210"/>
    </ligand>
</feature>
<feature type="binding site" evidence="1">
    <location>
        <begin position="194"/>
        <end position="196"/>
    </location>
    <ligand>
        <name>substrate</name>
    </ligand>
</feature>
<feature type="binding site" evidence="1">
    <location>
        <position position="198"/>
    </location>
    <ligand>
        <name>FMN</name>
        <dbReference type="ChEBI" id="CHEBI:58210"/>
    </ligand>
</feature>
<comment type="function">
    <text evidence="1">Catalyzes the oxidation of either pyridoxine 5'-phosphate (PNP) or pyridoxamine 5'-phosphate (PMP) into pyridoxal 5'-phosphate (PLP).</text>
</comment>
<comment type="catalytic activity">
    <reaction evidence="1">
        <text>pyridoxamine 5'-phosphate + O2 + H2O = pyridoxal 5'-phosphate + H2O2 + NH4(+)</text>
        <dbReference type="Rhea" id="RHEA:15817"/>
        <dbReference type="ChEBI" id="CHEBI:15377"/>
        <dbReference type="ChEBI" id="CHEBI:15379"/>
        <dbReference type="ChEBI" id="CHEBI:16240"/>
        <dbReference type="ChEBI" id="CHEBI:28938"/>
        <dbReference type="ChEBI" id="CHEBI:58451"/>
        <dbReference type="ChEBI" id="CHEBI:597326"/>
        <dbReference type="EC" id="1.4.3.5"/>
    </reaction>
</comment>
<comment type="catalytic activity">
    <reaction evidence="1">
        <text>pyridoxine 5'-phosphate + O2 = pyridoxal 5'-phosphate + H2O2</text>
        <dbReference type="Rhea" id="RHEA:15149"/>
        <dbReference type="ChEBI" id="CHEBI:15379"/>
        <dbReference type="ChEBI" id="CHEBI:16240"/>
        <dbReference type="ChEBI" id="CHEBI:58589"/>
        <dbReference type="ChEBI" id="CHEBI:597326"/>
        <dbReference type="EC" id="1.4.3.5"/>
    </reaction>
</comment>
<comment type="cofactor">
    <cofactor evidence="1">
        <name>FMN</name>
        <dbReference type="ChEBI" id="CHEBI:58210"/>
    </cofactor>
    <text evidence="1">Binds 1 FMN per subunit.</text>
</comment>
<comment type="pathway">
    <text evidence="1">Cofactor metabolism; pyridoxal 5'-phosphate salvage; pyridoxal 5'-phosphate from pyridoxamine 5'-phosphate: step 1/1.</text>
</comment>
<comment type="pathway">
    <text evidence="1">Cofactor metabolism; pyridoxal 5'-phosphate salvage; pyridoxal 5'-phosphate from pyridoxine 5'-phosphate: step 1/1.</text>
</comment>
<comment type="subunit">
    <text evidence="1">Homodimer.</text>
</comment>
<comment type="similarity">
    <text evidence="1">Belongs to the pyridoxamine 5'-phosphate oxidase family.</text>
</comment>
<name>PDXH_PSYCK</name>
<proteinExistence type="inferred from homology"/>
<evidence type="ECO:0000255" key="1">
    <source>
        <dbReference type="HAMAP-Rule" id="MF_01629"/>
    </source>
</evidence>
<organism>
    <name type="scientific">Psychrobacter cryohalolentis (strain ATCC BAA-1226 / DSM 17306 / VKM B-2378 / K5)</name>
    <dbReference type="NCBI Taxonomy" id="335284"/>
    <lineage>
        <taxon>Bacteria</taxon>
        <taxon>Pseudomonadati</taxon>
        <taxon>Pseudomonadota</taxon>
        <taxon>Gammaproteobacteria</taxon>
        <taxon>Moraxellales</taxon>
        <taxon>Moraxellaceae</taxon>
        <taxon>Psychrobacter</taxon>
    </lineage>
</organism>
<reference key="1">
    <citation type="submission" date="2006-03" db="EMBL/GenBank/DDBJ databases">
        <title>Complete sequence of chromosome of Psychrobacter cryohalolentis K5.</title>
        <authorList>
            <consortium name="US DOE Joint Genome Institute"/>
            <person name="Copeland A."/>
            <person name="Lucas S."/>
            <person name="Lapidus A."/>
            <person name="Barry K."/>
            <person name="Detter J.C."/>
            <person name="Glavina T."/>
            <person name="Hammon N."/>
            <person name="Israni S."/>
            <person name="Dalin E."/>
            <person name="Tice H."/>
            <person name="Pitluck S."/>
            <person name="Brettin T."/>
            <person name="Bruce D."/>
            <person name="Han C."/>
            <person name="Tapia R."/>
            <person name="Sims D.R."/>
            <person name="Gilna P."/>
            <person name="Schmutz J."/>
            <person name="Larimer F."/>
            <person name="Land M."/>
            <person name="Hauser L."/>
            <person name="Kyrpides N."/>
            <person name="Kim E."/>
            <person name="Richardson P."/>
        </authorList>
    </citation>
    <scope>NUCLEOTIDE SEQUENCE [LARGE SCALE GENOMIC DNA]</scope>
    <source>
        <strain>ATCC BAA-1226 / DSM 17306 / VKM B-2378 / K5</strain>
    </source>
</reference>
<keyword id="KW-0285">Flavoprotein</keyword>
<keyword id="KW-0288">FMN</keyword>
<keyword id="KW-0560">Oxidoreductase</keyword>
<keyword id="KW-0664">Pyridoxine biosynthesis</keyword>